<feature type="chain" id="PRO_0000158170" description="Imidazoleglycerol-phosphate dehydratase">
    <location>
        <begin position="1"/>
        <end position="192"/>
    </location>
</feature>
<reference key="1">
    <citation type="journal article" date="2002" name="Lancet">
        <title>Genome and virulence determinants of high virulence community-acquired MRSA.</title>
        <authorList>
            <person name="Baba T."/>
            <person name="Takeuchi F."/>
            <person name="Kuroda M."/>
            <person name="Yuzawa H."/>
            <person name="Aoki K."/>
            <person name="Oguchi A."/>
            <person name="Nagai Y."/>
            <person name="Iwama N."/>
            <person name="Asano K."/>
            <person name="Naimi T."/>
            <person name="Kuroda H."/>
            <person name="Cui L."/>
            <person name="Yamamoto K."/>
            <person name="Hiramatsu K."/>
        </authorList>
    </citation>
    <scope>NUCLEOTIDE SEQUENCE [LARGE SCALE GENOMIC DNA]</scope>
    <source>
        <strain>MW2</strain>
    </source>
</reference>
<evidence type="ECO:0000255" key="1">
    <source>
        <dbReference type="HAMAP-Rule" id="MF_00076"/>
    </source>
</evidence>
<accession>P64374</accession>
<accession>Q99QW5</accession>
<dbReference type="EC" id="4.2.1.19" evidence="1"/>
<dbReference type="EMBL" id="BA000033">
    <property type="protein sequence ID" value="BAB96460.1"/>
    <property type="molecule type" value="Genomic_DNA"/>
</dbReference>
<dbReference type="RefSeq" id="WP_000640266.1">
    <property type="nucleotide sequence ID" value="NC_003923.1"/>
</dbReference>
<dbReference type="SMR" id="P64374"/>
<dbReference type="KEGG" id="sam:MW2595"/>
<dbReference type="HOGENOM" id="CLU_044308_3_0_9"/>
<dbReference type="UniPathway" id="UPA00031">
    <property type="reaction ID" value="UER00011"/>
</dbReference>
<dbReference type="GO" id="GO:0005737">
    <property type="term" value="C:cytoplasm"/>
    <property type="evidence" value="ECO:0007669"/>
    <property type="project" value="UniProtKB-SubCell"/>
</dbReference>
<dbReference type="GO" id="GO:0004424">
    <property type="term" value="F:imidazoleglycerol-phosphate dehydratase activity"/>
    <property type="evidence" value="ECO:0007669"/>
    <property type="project" value="UniProtKB-UniRule"/>
</dbReference>
<dbReference type="GO" id="GO:0000105">
    <property type="term" value="P:L-histidine biosynthetic process"/>
    <property type="evidence" value="ECO:0007669"/>
    <property type="project" value="UniProtKB-UniRule"/>
</dbReference>
<dbReference type="CDD" id="cd07914">
    <property type="entry name" value="IGPD"/>
    <property type="match status" value="1"/>
</dbReference>
<dbReference type="FunFam" id="3.30.230.40:FF:000001">
    <property type="entry name" value="Imidazoleglycerol-phosphate dehydratase HisB"/>
    <property type="match status" value="1"/>
</dbReference>
<dbReference type="FunFam" id="3.30.230.40:FF:000003">
    <property type="entry name" value="Imidazoleglycerol-phosphate dehydratase HisB"/>
    <property type="match status" value="1"/>
</dbReference>
<dbReference type="Gene3D" id="3.30.230.40">
    <property type="entry name" value="Imidazole glycerol phosphate dehydratase, domain 1"/>
    <property type="match status" value="2"/>
</dbReference>
<dbReference type="HAMAP" id="MF_00076">
    <property type="entry name" value="HisB"/>
    <property type="match status" value="1"/>
</dbReference>
<dbReference type="InterPro" id="IPR038494">
    <property type="entry name" value="IGPD_sf"/>
</dbReference>
<dbReference type="InterPro" id="IPR000807">
    <property type="entry name" value="ImidazoleglycerolP_deHydtase"/>
</dbReference>
<dbReference type="InterPro" id="IPR020565">
    <property type="entry name" value="ImidazoleglycerP_deHydtase_CS"/>
</dbReference>
<dbReference type="InterPro" id="IPR020568">
    <property type="entry name" value="Ribosomal_Su5_D2-typ_SF"/>
</dbReference>
<dbReference type="NCBIfam" id="NF002107">
    <property type="entry name" value="PRK00951.1-2"/>
    <property type="match status" value="1"/>
</dbReference>
<dbReference type="NCBIfam" id="NF002111">
    <property type="entry name" value="PRK00951.2-1"/>
    <property type="match status" value="1"/>
</dbReference>
<dbReference type="NCBIfam" id="NF002114">
    <property type="entry name" value="PRK00951.2-4"/>
    <property type="match status" value="1"/>
</dbReference>
<dbReference type="PANTHER" id="PTHR23133:SF2">
    <property type="entry name" value="IMIDAZOLEGLYCEROL-PHOSPHATE DEHYDRATASE"/>
    <property type="match status" value="1"/>
</dbReference>
<dbReference type="PANTHER" id="PTHR23133">
    <property type="entry name" value="IMIDAZOLEGLYCEROL-PHOSPHATE DEHYDRATASE HIS7"/>
    <property type="match status" value="1"/>
</dbReference>
<dbReference type="Pfam" id="PF00475">
    <property type="entry name" value="IGPD"/>
    <property type="match status" value="1"/>
</dbReference>
<dbReference type="SUPFAM" id="SSF54211">
    <property type="entry name" value="Ribosomal protein S5 domain 2-like"/>
    <property type="match status" value="2"/>
</dbReference>
<dbReference type="PROSITE" id="PS00954">
    <property type="entry name" value="IGP_DEHYDRATASE_1"/>
    <property type="match status" value="1"/>
</dbReference>
<dbReference type="PROSITE" id="PS00955">
    <property type="entry name" value="IGP_DEHYDRATASE_2"/>
    <property type="match status" value="1"/>
</dbReference>
<organism>
    <name type="scientific">Staphylococcus aureus (strain MW2)</name>
    <dbReference type="NCBI Taxonomy" id="196620"/>
    <lineage>
        <taxon>Bacteria</taxon>
        <taxon>Bacillati</taxon>
        <taxon>Bacillota</taxon>
        <taxon>Bacilli</taxon>
        <taxon>Bacillales</taxon>
        <taxon>Staphylococcaceae</taxon>
        <taxon>Staphylococcus</taxon>
    </lineage>
</organism>
<comment type="catalytic activity">
    <reaction evidence="1">
        <text>D-erythro-1-(imidazol-4-yl)glycerol 3-phosphate = 3-(imidazol-4-yl)-2-oxopropyl phosphate + H2O</text>
        <dbReference type="Rhea" id="RHEA:11040"/>
        <dbReference type="ChEBI" id="CHEBI:15377"/>
        <dbReference type="ChEBI" id="CHEBI:57766"/>
        <dbReference type="ChEBI" id="CHEBI:58278"/>
        <dbReference type="EC" id="4.2.1.19"/>
    </reaction>
</comment>
<comment type="pathway">
    <text evidence="1">Amino-acid biosynthesis; L-histidine biosynthesis; L-histidine from 5-phospho-alpha-D-ribose 1-diphosphate: step 6/9.</text>
</comment>
<comment type="subcellular location">
    <subcellularLocation>
        <location evidence="1">Cytoplasm</location>
    </subcellularLocation>
</comment>
<comment type="similarity">
    <text evidence="1">Belongs to the imidazoleglycerol-phosphate dehydratase family.</text>
</comment>
<protein>
    <recommendedName>
        <fullName evidence="1">Imidazoleglycerol-phosphate dehydratase</fullName>
        <shortName evidence="1">IGPD</shortName>
        <ecNumber evidence="1">4.2.1.19</ecNumber>
    </recommendedName>
</protein>
<sequence length="192" mass="21456">MIYQKQRNTAETQLNISISDDQSPSHINTGVGFLNHMLTLFTFHSGLSLNIEAQGDIDVDDHHVTEDIGIVIGQLLLEMIKDKKHFVRYGTMYIPMDETLARVVVDISGRPYLSFNASLSKEKVGTFDTELVEEFFRAVVINARLTTHIDLIRGGNTHHEIEAIFKAFSRALGIALTATDDQRVPSSKGVIE</sequence>
<proteinExistence type="inferred from homology"/>
<name>HIS7_STAAW</name>
<gene>
    <name evidence="1" type="primary">hisB</name>
    <name type="ordered locus">MW2595</name>
</gene>
<keyword id="KW-0028">Amino-acid biosynthesis</keyword>
<keyword id="KW-0963">Cytoplasm</keyword>
<keyword id="KW-0368">Histidine biosynthesis</keyword>
<keyword id="KW-0456">Lyase</keyword>